<dbReference type="EC" id="2.3.2.13" evidence="2"/>
<dbReference type="EMBL" id="AK036403">
    <property type="protein sequence ID" value="BAC29414.1"/>
    <property type="molecule type" value="mRNA"/>
</dbReference>
<dbReference type="EMBL" id="AK049092">
    <property type="protein sequence ID" value="BAC33539.1"/>
    <property type="molecule type" value="mRNA"/>
</dbReference>
<dbReference type="EMBL" id="AK165311">
    <property type="protein sequence ID" value="BAE38130.1"/>
    <property type="molecule type" value="mRNA"/>
</dbReference>
<dbReference type="EMBL" id="BC040274">
    <property type="protein sequence ID" value="AAH40274.1"/>
    <property type="molecule type" value="mRNA"/>
</dbReference>
<dbReference type="CCDS" id="CCDS26456.1"/>
<dbReference type="RefSeq" id="NP_001159863.1">
    <property type="nucleotide sequence ID" value="NM_001166391.1"/>
</dbReference>
<dbReference type="RefSeq" id="NP_083060.2">
    <property type="nucleotide sequence ID" value="NM_028784.3"/>
</dbReference>
<dbReference type="SMR" id="Q8BH61"/>
<dbReference type="BioGRID" id="216524">
    <property type="interactions" value="8"/>
</dbReference>
<dbReference type="FunCoup" id="Q8BH61">
    <property type="interactions" value="216"/>
</dbReference>
<dbReference type="STRING" id="10090.ENSMUSP00000048667"/>
<dbReference type="BindingDB" id="Q8BH61"/>
<dbReference type="GlyCosmos" id="Q8BH61">
    <property type="glycosylation" value="1 site, No reported glycans"/>
</dbReference>
<dbReference type="GlyGen" id="Q8BH61">
    <property type="glycosylation" value="3 sites, 1 N-linked glycan (1 site), 1 O-linked glycan (1 site)"/>
</dbReference>
<dbReference type="iPTMnet" id="Q8BH61"/>
<dbReference type="PhosphoSitePlus" id="Q8BH61"/>
<dbReference type="CPTAC" id="non-CPTAC-5604"/>
<dbReference type="jPOST" id="Q8BH61"/>
<dbReference type="PaxDb" id="10090-ENSMUSP00000048667"/>
<dbReference type="ProteomicsDB" id="271521"/>
<dbReference type="Pumba" id="Q8BH61"/>
<dbReference type="Antibodypedia" id="882">
    <property type="antibodies" value="1454 antibodies from 42 providers"/>
</dbReference>
<dbReference type="DNASU" id="74145"/>
<dbReference type="Ensembl" id="ENSMUST00000037491.11">
    <property type="protein sequence ID" value="ENSMUSP00000048667.9"/>
    <property type="gene ID" value="ENSMUSG00000039109.18"/>
</dbReference>
<dbReference type="Ensembl" id="ENSMUST00000164727.8">
    <property type="protein sequence ID" value="ENSMUSP00000128316.2"/>
    <property type="gene ID" value="ENSMUSG00000039109.18"/>
</dbReference>
<dbReference type="GeneID" id="74145"/>
<dbReference type="KEGG" id="mmu:74145"/>
<dbReference type="UCSC" id="uc007qcn.2">
    <property type="organism name" value="mouse"/>
</dbReference>
<dbReference type="AGR" id="MGI:1921395"/>
<dbReference type="CTD" id="2162"/>
<dbReference type="MGI" id="MGI:1921395">
    <property type="gene designation" value="F13a1"/>
</dbReference>
<dbReference type="VEuPathDB" id="HostDB:ENSMUSG00000039109"/>
<dbReference type="eggNOG" id="ENOG502QQ46">
    <property type="taxonomic scope" value="Eukaryota"/>
</dbReference>
<dbReference type="GeneTree" id="ENSGT01050000244939"/>
<dbReference type="HOGENOM" id="CLU_013435_0_2_1"/>
<dbReference type="InParanoid" id="Q8BH61"/>
<dbReference type="OMA" id="FREVPRN"/>
<dbReference type="OrthoDB" id="437511at2759"/>
<dbReference type="PhylomeDB" id="Q8BH61"/>
<dbReference type="TreeFam" id="TF324278"/>
<dbReference type="BRENDA" id="2.3.2.13">
    <property type="organism ID" value="3474"/>
</dbReference>
<dbReference type="Reactome" id="R-MMU-114608">
    <property type="pathway name" value="Platelet degranulation"/>
</dbReference>
<dbReference type="Reactome" id="R-MMU-140875">
    <property type="pathway name" value="Common Pathway of Fibrin Clot Formation"/>
</dbReference>
<dbReference type="BioGRID-ORCS" id="74145">
    <property type="hits" value="0 hits in 77 CRISPR screens"/>
</dbReference>
<dbReference type="ChiTaRS" id="F13a1">
    <property type="organism name" value="mouse"/>
</dbReference>
<dbReference type="PRO" id="PR:Q8BH61"/>
<dbReference type="Proteomes" id="UP000000589">
    <property type="component" value="Chromosome 13"/>
</dbReference>
<dbReference type="RNAct" id="Q8BH61">
    <property type="molecule type" value="protein"/>
</dbReference>
<dbReference type="Bgee" id="ENSMUSG00000039109">
    <property type="expression patterns" value="Expressed in stroma of bone marrow and 172 other cell types or tissues"/>
</dbReference>
<dbReference type="GO" id="GO:0062023">
    <property type="term" value="C:collagen-containing extracellular matrix"/>
    <property type="evidence" value="ECO:0007005"/>
    <property type="project" value="BHF-UCL"/>
</dbReference>
<dbReference type="GO" id="GO:0005737">
    <property type="term" value="C:cytoplasm"/>
    <property type="evidence" value="ECO:0007669"/>
    <property type="project" value="UniProtKB-SubCell"/>
</dbReference>
<dbReference type="GO" id="GO:0005576">
    <property type="term" value="C:extracellular region"/>
    <property type="evidence" value="ECO:0007669"/>
    <property type="project" value="UniProtKB-SubCell"/>
</dbReference>
<dbReference type="GO" id="GO:0046872">
    <property type="term" value="F:metal ion binding"/>
    <property type="evidence" value="ECO:0007669"/>
    <property type="project" value="UniProtKB-KW"/>
</dbReference>
<dbReference type="GO" id="GO:0003810">
    <property type="term" value="F:protein-glutamine gamma-glutamyltransferase activity"/>
    <property type="evidence" value="ECO:0000315"/>
    <property type="project" value="MGI"/>
</dbReference>
<dbReference type="GO" id="GO:0007596">
    <property type="term" value="P:blood coagulation"/>
    <property type="evidence" value="ECO:0000315"/>
    <property type="project" value="MGI"/>
</dbReference>
<dbReference type="GO" id="GO:0072378">
    <property type="term" value="P:blood coagulation, fibrin clot formation"/>
    <property type="evidence" value="ECO:0000315"/>
    <property type="project" value="MGI"/>
</dbReference>
<dbReference type="GO" id="GO:0018149">
    <property type="term" value="P:peptide cross-linking"/>
    <property type="evidence" value="ECO:0000250"/>
    <property type="project" value="UniProtKB"/>
</dbReference>
<dbReference type="FunFam" id="2.60.40.10:FF:001301">
    <property type="entry name" value="Coagulation factor XIII A chain"/>
    <property type="match status" value="1"/>
</dbReference>
<dbReference type="FunFam" id="2.60.40.10:FF:000978">
    <property type="entry name" value="coagulation factor XIII A chain"/>
    <property type="match status" value="1"/>
</dbReference>
<dbReference type="FunFam" id="3.90.260.10:FF:000001">
    <property type="entry name" value="Protein-glutamine gamma-glutamyltransferase 2"/>
    <property type="match status" value="1"/>
</dbReference>
<dbReference type="FunFam" id="2.60.40.10:FF:000171">
    <property type="entry name" value="protein-glutamine gamma-glutamyltransferase 6"/>
    <property type="match status" value="1"/>
</dbReference>
<dbReference type="Gene3D" id="2.60.40.10">
    <property type="entry name" value="Immunoglobulins"/>
    <property type="match status" value="3"/>
</dbReference>
<dbReference type="Gene3D" id="3.90.260.10">
    <property type="entry name" value="Transglutaminase-like"/>
    <property type="match status" value="1"/>
</dbReference>
<dbReference type="InterPro" id="IPR013783">
    <property type="entry name" value="Ig-like_fold"/>
</dbReference>
<dbReference type="InterPro" id="IPR014756">
    <property type="entry name" value="Ig_E-set"/>
</dbReference>
<dbReference type="InterPro" id="IPR038765">
    <property type="entry name" value="Papain-like_cys_pep_sf"/>
</dbReference>
<dbReference type="InterPro" id="IPR050779">
    <property type="entry name" value="Transglutaminase"/>
</dbReference>
<dbReference type="InterPro" id="IPR002931">
    <property type="entry name" value="Transglutaminase-like"/>
</dbReference>
<dbReference type="InterPro" id="IPR036985">
    <property type="entry name" value="Transglutaminase-like_sf"/>
</dbReference>
<dbReference type="InterPro" id="IPR023608">
    <property type="entry name" value="Transglutaminase_animal"/>
</dbReference>
<dbReference type="InterPro" id="IPR013808">
    <property type="entry name" value="Transglutaminase_AS"/>
</dbReference>
<dbReference type="InterPro" id="IPR008958">
    <property type="entry name" value="Transglutaminase_C"/>
</dbReference>
<dbReference type="InterPro" id="IPR036238">
    <property type="entry name" value="Transglutaminase_C_sf"/>
</dbReference>
<dbReference type="InterPro" id="IPR001102">
    <property type="entry name" value="Transglutaminase_N"/>
</dbReference>
<dbReference type="PANTHER" id="PTHR11590:SF42">
    <property type="entry name" value="COAGULATION FACTOR XIII A CHAIN"/>
    <property type="match status" value="1"/>
</dbReference>
<dbReference type="PANTHER" id="PTHR11590">
    <property type="entry name" value="PROTEIN-GLUTAMINE GAMMA-GLUTAMYLTRANSFERASE"/>
    <property type="match status" value="1"/>
</dbReference>
<dbReference type="Pfam" id="PF00927">
    <property type="entry name" value="Transglut_C"/>
    <property type="match status" value="2"/>
</dbReference>
<dbReference type="Pfam" id="PF01841">
    <property type="entry name" value="Transglut_core"/>
    <property type="match status" value="1"/>
</dbReference>
<dbReference type="Pfam" id="PF00868">
    <property type="entry name" value="Transglut_N"/>
    <property type="match status" value="1"/>
</dbReference>
<dbReference type="PIRSF" id="PIRSF000459">
    <property type="entry name" value="TGM_EBP42"/>
    <property type="match status" value="1"/>
</dbReference>
<dbReference type="SMART" id="SM00460">
    <property type="entry name" value="TGc"/>
    <property type="match status" value="1"/>
</dbReference>
<dbReference type="SUPFAM" id="SSF54001">
    <property type="entry name" value="Cysteine proteinases"/>
    <property type="match status" value="1"/>
</dbReference>
<dbReference type="SUPFAM" id="SSF81296">
    <property type="entry name" value="E set domains"/>
    <property type="match status" value="1"/>
</dbReference>
<dbReference type="SUPFAM" id="SSF49309">
    <property type="entry name" value="Transglutaminase, two C-terminal domains"/>
    <property type="match status" value="2"/>
</dbReference>
<dbReference type="PROSITE" id="PS00547">
    <property type="entry name" value="TRANSGLUTAMINASES"/>
    <property type="match status" value="1"/>
</dbReference>
<reference key="1">
    <citation type="journal article" date="2005" name="Science">
        <title>The transcriptional landscape of the mammalian genome.</title>
        <authorList>
            <person name="Carninci P."/>
            <person name="Kasukawa T."/>
            <person name="Katayama S."/>
            <person name="Gough J."/>
            <person name="Frith M.C."/>
            <person name="Maeda N."/>
            <person name="Oyama R."/>
            <person name="Ravasi T."/>
            <person name="Lenhard B."/>
            <person name="Wells C."/>
            <person name="Kodzius R."/>
            <person name="Shimokawa K."/>
            <person name="Bajic V.B."/>
            <person name="Brenner S.E."/>
            <person name="Batalov S."/>
            <person name="Forrest A.R."/>
            <person name="Zavolan M."/>
            <person name="Davis M.J."/>
            <person name="Wilming L.G."/>
            <person name="Aidinis V."/>
            <person name="Allen J.E."/>
            <person name="Ambesi-Impiombato A."/>
            <person name="Apweiler R."/>
            <person name="Aturaliya R.N."/>
            <person name="Bailey T.L."/>
            <person name="Bansal M."/>
            <person name="Baxter L."/>
            <person name="Beisel K.W."/>
            <person name="Bersano T."/>
            <person name="Bono H."/>
            <person name="Chalk A.M."/>
            <person name="Chiu K.P."/>
            <person name="Choudhary V."/>
            <person name="Christoffels A."/>
            <person name="Clutterbuck D.R."/>
            <person name="Crowe M.L."/>
            <person name="Dalla E."/>
            <person name="Dalrymple B.P."/>
            <person name="de Bono B."/>
            <person name="Della Gatta G."/>
            <person name="di Bernardo D."/>
            <person name="Down T."/>
            <person name="Engstrom P."/>
            <person name="Fagiolini M."/>
            <person name="Faulkner G."/>
            <person name="Fletcher C.F."/>
            <person name="Fukushima T."/>
            <person name="Furuno M."/>
            <person name="Futaki S."/>
            <person name="Gariboldi M."/>
            <person name="Georgii-Hemming P."/>
            <person name="Gingeras T.R."/>
            <person name="Gojobori T."/>
            <person name="Green R.E."/>
            <person name="Gustincich S."/>
            <person name="Harbers M."/>
            <person name="Hayashi Y."/>
            <person name="Hensch T.K."/>
            <person name="Hirokawa N."/>
            <person name="Hill D."/>
            <person name="Huminiecki L."/>
            <person name="Iacono M."/>
            <person name="Ikeo K."/>
            <person name="Iwama A."/>
            <person name="Ishikawa T."/>
            <person name="Jakt M."/>
            <person name="Kanapin A."/>
            <person name="Katoh M."/>
            <person name="Kawasawa Y."/>
            <person name="Kelso J."/>
            <person name="Kitamura H."/>
            <person name="Kitano H."/>
            <person name="Kollias G."/>
            <person name="Krishnan S.P."/>
            <person name="Kruger A."/>
            <person name="Kummerfeld S.K."/>
            <person name="Kurochkin I.V."/>
            <person name="Lareau L.F."/>
            <person name="Lazarevic D."/>
            <person name="Lipovich L."/>
            <person name="Liu J."/>
            <person name="Liuni S."/>
            <person name="McWilliam S."/>
            <person name="Madan Babu M."/>
            <person name="Madera M."/>
            <person name="Marchionni L."/>
            <person name="Matsuda H."/>
            <person name="Matsuzawa S."/>
            <person name="Miki H."/>
            <person name="Mignone F."/>
            <person name="Miyake S."/>
            <person name="Morris K."/>
            <person name="Mottagui-Tabar S."/>
            <person name="Mulder N."/>
            <person name="Nakano N."/>
            <person name="Nakauchi H."/>
            <person name="Ng P."/>
            <person name="Nilsson R."/>
            <person name="Nishiguchi S."/>
            <person name="Nishikawa S."/>
            <person name="Nori F."/>
            <person name="Ohara O."/>
            <person name="Okazaki Y."/>
            <person name="Orlando V."/>
            <person name="Pang K.C."/>
            <person name="Pavan W.J."/>
            <person name="Pavesi G."/>
            <person name="Pesole G."/>
            <person name="Petrovsky N."/>
            <person name="Piazza S."/>
            <person name="Reed J."/>
            <person name="Reid J.F."/>
            <person name="Ring B.Z."/>
            <person name="Ringwald M."/>
            <person name="Rost B."/>
            <person name="Ruan Y."/>
            <person name="Salzberg S.L."/>
            <person name="Sandelin A."/>
            <person name="Schneider C."/>
            <person name="Schoenbach C."/>
            <person name="Sekiguchi K."/>
            <person name="Semple C.A."/>
            <person name="Seno S."/>
            <person name="Sessa L."/>
            <person name="Sheng Y."/>
            <person name="Shibata Y."/>
            <person name="Shimada H."/>
            <person name="Shimada K."/>
            <person name="Silva D."/>
            <person name="Sinclair B."/>
            <person name="Sperling S."/>
            <person name="Stupka E."/>
            <person name="Sugiura K."/>
            <person name="Sultana R."/>
            <person name="Takenaka Y."/>
            <person name="Taki K."/>
            <person name="Tammoja K."/>
            <person name="Tan S.L."/>
            <person name="Tang S."/>
            <person name="Taylor M.S."/>
            <person name="Tegner J."/>
            <person name="Teichmann S.A."/>
            <person name="Ueda H.R."/>
            <person name="van Nimwegen E."/>
            <person name="Verardo R."/>
            <person name="Wei C.L."/>
            <person name="Yagi K."/>
            <person name="Yamanishi H."/>
            <person name="Zabarovsky E."/>
            <person name="Zhu S."/>
            <person name="Zimmer A."/>
            <person name="Hide W."/>
            <person name="Bult C."/>
            <person name="Grimmond S.M."/>
            <person name="Teasdale R.D."/>
            <person name="Liu E.T."/>
            <person name="Brusic V."/>
            <person name="Quackenbush J."/>
            <person name="Wahlestedt C."/>
            <person name="Mattick J.S."/>
            <person name="Hume D.A."/>
            <person name="Kai C."/>
            <person name="Sasaki D."/>
            <person name="Tomaru Y."/>
            <person name="Fukuda S."/>
            <person name="Kanamori-Katayama M."/>
            <person name="Suzuki M."/>
            <person name="Aoki J."/>
            <person name="Arakawa T."/>
            <person name="Iida J."/>
            <person name="Imamura K."/>
            <person name="Itoh M."/>
            <person name="Kato T."/>
            <person name="Kawaji H."/>
            <person name="Kawagashira N."/>
            <person name="Kawashima T."/>
            <person name="Kojima M."/>
            <person name="Kondo S."/>
            <person name="Konno H."/>
            <person name="Nakano K."/>
            <person name="Ninomiya N."/>
            <person name="Nishio T."/>
            <person name="Okada M."/>
            <person name="Plessy C."/>
            <person name="Shibata K."/>
            <person name="Shiraki T."/>
            <person name="Suzuki S."/>
            <person name="Tagami M."/>
            <person name="Waki K."/>
            <person name="Watahiki A."/>
            <person name="Okamura-Oho Y."/>
            <person name="Suzuki H."/>
            <person name="Kawai J."/>
            <person name="Hayashizaki Y."/>
        </authorList>
    </citation>
    <scope>NUCLEOTIDE SEQUENCE [LARGE SCALE MRNA]</scope>
    <source>
        <strain>C57BL/6J</strain>
        <tissue>Bone</tissue>
        <tissue>Cerebellum</tissue>
        <tissue>Spleen</tissue>
    </source>
</reference>
<reference key="2">
    <citation type="journal article" date="2004" name="Genome Res.">
        <title>The status, quality, and expansion of the NIH full-length cDNA project: the Mammalian Gene Collection (MGC).</title>
        <authorList>
            <consortium name="The MGC Project Team"/>
        </authorList>
    </citation>
    <scope>NUCLEOTIDE SEQUENCE [LARGE SCALE MRNA]</scope>
    <source>
        <strain>FVB/N</strain>
        <tissue>Mammary tumor</tissue>
    </source>
</reference>
<reference key="3">
    <citation type="journal article" date="2010" name="Cell">
        <title>A tissue-specific atlas of mouse protein phosphorylation and expression.</title>
        <authorList>
            <person name="Huttlin E.L."/>
            <person name="Jedrychowski M.P."/>
            <person name="Elias J.E."/>
            <person name="Goswami T."/>
            <person name="Rad R."/>
            <person name="Beausoleil S.A."/>
            <person name="Villen J."/>
            <person name="Haas W."/>
            <person name="Sowa M.E."/>
            <person name="Gygi S.P."/>
        </authorList>
    </citation>
    <scope>IDENTIFICATION BY MASS SPECTROMETRY [LARGE SCALE ANALYSIS]</scope>
    <source>
        <tissue>Brain</tissue>
        <tissue>Brown adipose tissue</tissue>
        <tissue>Heart</tissue>
        <tissue>Lung</tissue>
        <tissue>Pancreas</tissue>
        <tissue>Spleen</tissue>
        <tissue>Testis</tissue>
    </source>
</reference>
<evidence type="ECO:0000250" key="1"/>
<evidence type="ECO:0000250" key="2">
    <source>
        <dbReference type="UniProtKB" id="P00488"/>
    </source>
</evidence>
<evidence type="ECO:0000255" key="3"/>
<evidence type="ECO:0000255" key="4">
    <source>
        <dbReference type="PROSITE-ProRule" id="PRU10024"/>
    </source>
</evidence>
<evidence type="ECO:0000256" key="5">
    <source>
        <dbReference type="SAM" id="MobiDB-lite"/>
    </source>
</evidence>
<evidence type="ECO:0000305" key="6"/>
<comment type="function">
    <text evidence="2">Factor XIII is activated by thrombin and calcium ion to a transglutaminase that catalyzes the formation of gamma-glutamyl-epsilon-lysine cross-links between fibrin chains, thus stabilizing the fibrin clot. Also cross-link alpha-2-plasmin inhibitor, or fibronectin, to the alpha chains of fibrin.</text>
</comment>
<comment type="catalytic activity">
    <reaction evidence="2">
        <text>L-glutaminyl-[protein] + L-lysyl-[protein] = [protein]-L-lysyl-N(6)-5-L-glutamyl-[protein] + NH4(+)</text>
        <dbReference type="Rhea" id="RHEA:54816"/>
        <dbReference type="Rhea" id="RHEA-COMP:9752"/>
        <dbReference type="Rhea" id="RHEA-COMP:10207"/>
        <dbReference type="Rhea" id="RHEA-COMP:14005"/>
        <dbReference type="ChEBI" id="CHEBI:28938"/>
        <dbReference type="ChEBI" id="CHEBI:29969"/>
        <dbReference type="ChEBI" id="CHEBI:30011"/>
        <dbReference type="ChEBI" id="CHEBI:138370"/>
        <dbReference type="EC" id="2.3.2.13"/>
    </reaction>
</comment>
<comment type="cofactor">
    <cofactor evidence="2">
        <name>Ca(2+)</name>
        <dbReference type="ChEBI" id="CHEBI:29108"/>
    </cofactor>
    <text evidence="2">Binds 1 Ca(2+) ion per subunit.</text>
</comment>
<comment type="subunit">
    <text evidence="2">Tetramer of two A chains (F13A1) and two B (F13B) chains.</text>
</comment>
<comment type="subcellular location">
    <subcellularLocation>
        <location evidence="2">Cytoplasm</location>
    </subcellularLocation>
    <subcellularLocation>
        <location evidence="2">Secreted</location>
    </subcellularLocation>
    <text evidence="2">Secreted into the blood plasma. Cytoplasmic in most tissues, but also secreted in the blood plasma.</text>
</comment>
<comment type="PTM">
    <text evidence="1">The activation peptide is released by thrombin.</text>
</comment>
<comment type="similarity">
    <text evidence="6">Belongs to the transglutaminase superfamily. Transglutaminase family.</text>
</comment>
<keyword id="KW-0007">Acetylation</keyword>
<keyword id="KW-0012">Acyltransferase</keyword>
<keyword id="KW-0094">Blood coagulation</keyword>
<keyword id="KW-0106">Calcium</keyword>
<keyword id="KW-0963">Cytoplasm</keyword>
<keyword id="KW-0325">Glycoprotein</keyword>
<keyword id="KW-0356">Hemostasis</keyword>
<keyword id="KW-0479">Metal-binding</keyword>
<keyword id="KW-1185">Reference proteome</keyword>
<keyword id="KW-0964">Secreted</keyword>
<keyword id="KW-0808">Transferase</keyword>
<keyword id="KW-0865">Zymogen</keyword>
<accession>Q8BH61</accession>
<accession>Q3TNF9</accession>
<accession>Q8BIP2</accession>
<protein>
    <recommendedName>
        <fullName>Coagulation factor XIII A chain</fullName>
        <shortName>Coagulation factor XIIIa</shortName>
        <ecNumber evidence="2">2.3.2.13</ecNumber>
    </recommendedName>
    <alternativeName>
        <fullName>Protein-glutamine gamma-glutamyltransferase A chain</fullName>
    </alternativeName>
    <alternativeName>
        <fullName>Transglutaminase A chain</fullName>
    </alternativeName>
</protein>
<sequence length="732" mass="83207">MSDTPASTFGGRRAVPPNNSNAAEVDLPTEELQGLVPRGVNLKDYLNVTAVHLFKERWDSNKIDHHTDKYDNNKLIVRRGQTFYIQIDFNRPYDPRKDLFRVEYVIGRYPQENKGTYIPVPVVKELQSGKWGAKVIMNEDRSVRLSVQSSPECIVGKFRMYVAVWTPYGILRTRRDPETDTYILFNPWCEEDAVYLDDEKEREEYVLNDIGVIFYGDFKDIKSRSWSYGQFEDGILDTCLYVMDKAEMDLSGRGNPIKVSRVGSAMVNAKDDEGVLVGSWDNVYAYGIPPSAWTGSVDILLEYRSSETPVRYGQCWVFAGVFNTFLRCLGIPARVITNYFSAHDNDANLQMDIFLEEDGNVSSKLTKDSVWNYHCWNEAWMTRPDLPVGFGGWQAVDSTPQENSDGMYRCGPASVQAVKHGHVCFQFDAPFVFAEVNSDLVYITAKQDGTHVVEAVDATHIGKLIVTKQIGGDGMQDITDTYKFQEGQEEERLALETALMYGAKKTLNTEGVVKSRSDVTMNFDVENAVLGKDFKVTITFQNNSSNLYTILAYLSGNITFYTGVSKKEFKKESFEETLDPFSSKKKEVLVRAGEYMSHLLEQGFLHFFVTARINESRDVLAKQKSIILTIPKITIKVRGAAMVGSDMVVTVEFTNPLKETLQNVWIHLDGPGVMRPKRKVFREIRPNTTVQWEEVCRPWVSGHRKLIASMTSDSLRHVYGELDLQIQRRPTM</sequence>
<proteinExistence type="evidence at protein level"/>
<feature type="initiator methionine" description="Removed" evidence="2">
    <location>
        <position position="1"/>
    </location>
</feature>
<feature type="propeptide" id="PRO_0000033648" description="Activation peptide" evidence="1">
    <location>
        <begin position="2"/>
        <end position="38"/>
    </location>
</feature>
<feature type="chain" id="PRO_0000033649" description="Coagulation factor XIII A chain">
    <location>
        <begin position="39"/>
        <end position="732"/>
    </location>
</feature>
<feature type="region of interest" description="Disordered" evidence="5">
    <location>
        <begin position="1"/>
        <end position="26"/>
    </location>
</feature>
<feature type="active site" evidence="4">
    <location>
        <position position="315"/>
    </location>
</feature>
<feature type="active site" evidence="4">
    <location>
        <position position="374"/>
    </location>
</feature>
<feature type="active site" evidence="4">
    <location>
        <position position="397"/>
    </location>
</feature>
<feature type="binding site" evidence="2">
    <location>
        <position position="437"/>
    </location>
    <ligand>
        <name>Ca(2+)</name>
        <dbReference type="ChEBI" id="CHEBI:29108"/>
    </ligand>
</feature>
<feature type="binding site" evidence="2">
    <location>
        <position position="439"/>
    </location>
    <ligand>
        <name>Ca(2+)</name>
        <dbReference type="ChEBI" id="CHEBI:29108"/>
    </ligand>
</feature>
<feature type="binding site" evidence="2">
    <location>
        <position position="486"/>
    </location>
    <ligand>
        <name>Ca(2+)</name>
        <dbReference type="ChEBI" id="CHEBI:29108"/>
    </ligand>
</feature>
<feature type="binding site" evidence="2">
    <location>
        <position position="491"/>
    </location>
    <ligand>
        <name>Ca(2+)</name>
        <dbReference type="ChEBI" id="CHEBI:29108"/>
    </ligand>
</feature>
<feature type="site" description="Cleavage; by thrombin; to produce active factor XIII-A" evidence="1">
    <location>
        <begin position="38"/>
        <end position="39"/>
    </location>
</feature>
<feature type="modified residue" description="N-acetylserine" evidence="2">
    <location>
        <position position="2"/>
    </location>
</feature>
<feature type="glycosylation site" description="N-linked (GlcNAc...) asparagine" evidence="3">
    <location>
        <position position="614"/>
    </location>
</feature>
<feature type="sequence conflict" description="In Ref. 1; BAC29414." evidence="6" ref="1">
    <original>P</original>
    <variation>Q</variation>
    <location>
        <position position="5"/>
    </location>
</feature>
<organism>
    <name type="scientific">Mus musculus</name>
    <name type="common">Mouse</name>
    <dbReference type="NCBI Taxonomy" id="10090"/>
    <lineage>
        <taxon>Eukaryota</taxon>
        <taxon>Metazoa</taxon>
        <taxon>Chordata</taxon>
        <taxon>Craniata</taxon>
        <taxon>Vertebrata</taxon>
        <taxon>Euteleostomi</taxon>
        <taxon>Mammalia</taxon>
        <taxon>Eutheria</taxon>
        <taxon>Euarchontoglires</taxon>
        <taxon>Glires</taxon>
        <taxon>Rodentia</taxon>
        <taxon>Myomorpha</taxon>
        <taxon>Muroidea</taxon>
        <taxon>Muridae</taxon>
        <taxon>Murinae</taxon>
        <taxon>Mus</taxon>
        <taxon>Mus</taxon>
    </lineage>
</organism>
<name>F13A_MOUSE</name>
<gene>
    <name type="primary">F13a1</name>
    <name type="synonym">F13a</name>
</gene>